<comment type="function">
    <text evidence="1">Catalyzes the conversion of (8S)-3',8-cyclo-7,8-dihydroguanosine 5'-triphosphate to cyclic pyranopterin monophosphate (cPMP).</text>
</comment>
<comment type="catalytic activity">
    <reaction evidence="1">
        <text>(8S)-3',8-cyclo-7,8-dihydroguanosine 5'-triphosphate = cyclic pyranopterin phosphate + diphosphate</text>
        <dbReference type="Rhea" id="RHEA:49580"/>
        <dbReference type="ChEBI" id="CHEBI:33019"/>
        <dbReference type="ChEBI" id="CHEBI:59648"/>
        <dbReference type="ChEBI" id="CHEBI:131766"/>
        <dbReference type="EC" id="4.6.1.17"/>
    </reaction>
</comment>
<comment type="pathway">
    <text evidence="1">Cofactor biosynthesis; molybdopterin biosynthesis.</text>
</comment>
<comment type="subunit">
    <text evidence="1">Homohexamer; trimer of dimers.</text>
</comment>
<comment type="similarity">
    <text evidence="1">Belongs to the MoaC family.</text>
</comment>
<dbReference type="EC" id="4.6.1.17" evidence="1"/>
<dbReference type="EMBL" id="CP000046">
    <property type="protein sequence ID" value="AAW38487.1"/>
    <property type="molecule type" value="Genomic_DNA"/>
</dbReference>
<dbReference type="RefSeq" id="WP_000134528.1">
    <property type="nucleotide sequence ID" value="NZ_JBGOFO010000004.1"/>
</dbReference>
<dbReference type="SMR" id="Q5HDT3"/>
<dbReference type="KEGG" id="sac:SACOL2267"/>
<dbReference type="HOGENOM" id="CLU_074693_1_1_9"/>
<dbReference type="UniPathway" id="UPA00344"/>
<dbReference type="Proteomes" id="UP000000530">
    <property type="component" value="Chromosome"/>
</dbReference>
<dbReference type="GO" id="GO:0061799">
    <property type="term" value="F:cyclic pyranopterin monophosphate synthase activity"/>
    <property type="evidence" value="ECO:0007669"/>
    <property type="project" value="UniProtKB-UniRule"/>
</dbReference>
<dbReference type="GO" id="GO:0006777">
    <property type="term" value="P:Mo-molybdopterin cofactor biosynthetic process"/>
    <property type="evidence" value="ECO:0007669"/>
    <property type="project" value="UniProtKB-UniRule"/>
</dbReference>
<dbReference type="CDD" id="cd01420">
    <property type="entry name" value="MoaC_PE"/>
    <property type="match status" value="1"/>
</dbReference>
<dbReference type="Gene3D" id="3.30.70.640">
    <property type="entry name" value="Molybdopterin cofactor biosynthesis C (MoaC) domain"/>
    <property type="match status" value="1"/>
</dbReference>
<dbReference type="HAMAP" id="MF_01224_B">
    <property type="entry name" value="MoaC_B"/>
    <property type="match status" value="1"/>
</dbReference>
<dbReference type="InterPro" id="IPR023045">
    <property type="entry name" value="MoaC"/>
</dbReference>
<dbReference type="InterPro" id="IPR047594">
    <property type="entry name" value="MoaC_bact/euk"/>
</dbReference>
<dbReference type="InterPro" id="IPR036522">
    <property type="entry name" value="MoaC_sf"/>
</dbReference>
<dbReference type="InterPro" id="IPR050105">
    <property type="entry name" value="MoCo_biosynth_MoaA/MoaC"/>
</dbReference>
<dbReference type="InterPro" id="IPR002820">
    <property type="entry name" value="Mopterin_CF_biosynth-C_dom"/>
</dbReference>
<dbReference type="NCBIfam" id="TIGR00581">
    <property type="entry name" value="moaC"/>
    <property type="match status" value="1"/>
</dbReference>
<dbReference type="NCBIfam" id="NF006870">
    <property type="entry name" value="PRK09364.1"/>
    <property type="match status" value="1"/>
</dbReference>
<dbReference type="PANTHER" id="PTHR22960">
    <property type="entry name" value="MOLYBDOPTERIN COFACTOR SYNTHESIS PROTEIN A"/>
    <property type="match status" value="1"/>
</dbReference>
<dbReference type="Pfam" id="PF01967">
    <property type="entry name" value="MoaC"/>
    <property type="match status" value="1"/>
</dbReference>
<dbReference type="SUPFAM" id="SSF55040">
    <property type="entry name" value="Molybdenum cofactor biosynthesis protein C, MoaC"/>
    <property type="match status" value="1"/>
</dbReference>
<protein>
    <recommendedName>
        <fullName evidence="1">Cyclic pyranopterin monophosphate synthase</fullName>
        <ecNumber evidence="1">4.6.1.17</ecNumber>
    </recommendedName>
    <alternativeName>
        <fullName evidence="1">Molybdenum cofactor biosynthesis protein C</fullName>
    </alternativeName>
</protein>
<feature type="chain" id="PRO_0000097829" description="Cyclic pyranopterin monophosphate synthase">
    <location>
        <begin position="1"/>
        <end position="164"/>
    </location>
</feature>
<feature type="active site" evidence="1">
    <location>
        <position position="131"/>
    </location>
</feature>
<feature type="binding site" evidence="1">
    <location>
        <begin position="75"/>
        <end position="77"/>
    </location>
    <ligand>
        <name>substrate</name>
    </ligand>
</feature>
<feature type="binding site" evidence="1">
    <location>
        <begin position="116"/>
        <end position="117"/>
    </location>
    <ligand>
        <name>substrate</name>
    </ligand>
</feature>
<name>MOAC_STAAC</name>
<keyword id="KW-0456">Lyase</keyword>
<keyword id="KW-0501">Molybdenum cofactor biosynthesis</keyword>
<gene>
    <name evidence="1" type="primary">moaC</name>
    <name type="ordered locus">SACOL2267</name>
</gene>
<organism>
    <name type="scientific">Staphylococcus aureus (strain COL)</name>
    <dbReference type="NCBI Taxonomy" id="93062"/>
    <lineage>
        <taxon>Bacteria</taxon>
        <taxon>Bacillati</taxon>
        <taxon>Bacillota</taxon>
        <taxon>Bacilli</taxon>
        <taxon>Bacillales</taxon>
        <taxon>Staphylococcaceae</taxon>
        <taxon>Staphylococcus</taxon>
    </lineage>
</organism>
<proteinExistence type="inferred from homology"/>
<evidence type="ECO:0000255" key="1">
    <source>
        <dbReference type="HAMAP-Rule" id="MF_01224"/>
    </source>
</evidence>
<sequence>MTEFTHINQQGHAKMVDVSDKQITKRTAVAHSSITVNETIFKQISNNTNTKGNVLNTAQIAGIMAAKNTSTLIPMCHPLPLTGIDVHFSWDETNAPLYTLNIQTTVSTTGKTGVEMEALTAASATALTIYDMTKAVDKGMIIGETYLESKSGGKSGDFQRQSNQ</sequence>
<accession>Q5HDT3</accession>
<reference key="1">
    <citation type="journal article" date="2005" name="J. Bacteriol.">
        <title>Insights on evolution of virulence and resistance from the complete genome analysis of an early methicillin-resistant Staphylococcus aureus strain and a biofilm-producing methicillin-resistant Staphylococcus epidermidis strain.</title>
        <authorList>
            <person name="Gill S.R."/>
            <person name="Fouts D.E."/>
            <person name="Archer G.L."/>
            <person name="Mongodin E.F."/>
            <person name="DeBoy R.T."/>
            <person name="Ravel J."/>
            <person name="Paulsen I.T."/>
            <person name="Kolonay J.F."/>
            <person name="Brinkac L.M."/>
            <person name="Beanan M.J."/>
            <person name="Dodson R.J."/>
            <person name="Daugherty S.C."/>
            <person name="Madupu R."/>
            <person name="Angiuoli S.V."/>
            <person name="Durkin A.S."/>
            <person name="Haft D.H."/>
            <person name="Vamathevan J.J."/>
            <person name="Khouri H."/>
            <person name="Utterback T.R."/>
            <person name="Lee C."/>
            <person name="Dimitrov G."/>
            <person name="Jiang L."/>
            <person name="Qin H."/>
            <person name="Weidman J."/>
            <person name="Tran K."/>
            <person name="Kang K.H."/>
            <person name="Hance I.R."/>
            <person name="Nelson K.E."/>
            <person name="Fraser C.M."/>
        </authorList>
    </citation>
    <scope>NUCLEOTIDE SEQUENCE [LARGE SCALE GENOMIC DNA]</scope>
    <source>
        <strain>COL</strain>
    </source>
</reference>